<dbReference type="EC" id="5.3.1.16"/>
<dbReference type="EMBL" id="AF067228">
    <property type="protein sequence ID" value="AAC97359.1"/>
    <property type="molecule type" value="Genomic_DNA"/>
</dbReference>
<dbReference type="EMBL" id="AE013218">
    <property type="protein sequence ID" value="AAM67667.1"/>
    <property type="molecule type" value="Genomic_DNA"/>
</dbReference>
<dbReference type="RefSeq" id="WP_011053633.1">
    <property type="nucleotide sequence ID" value="NC_004061.1"/>
</dbReference>
<dbReference type="SMR" id="Q9ZHE2"/>
<dbReference type="STRING" id="198804.BUsg_097"/>
<dbReference type="GeneID" id="93003566"/>
<dbReference type="KEGG" id="bas:BUsg_097"/>
<dbReference type="eggNOG" id="COG0106">
    <property type="taxonomic scope" value="Bacteria"/>
</dbReference>
<dbReference type="HOGENOM" id="CLU_048577_1_2_6"/>
<dbReference type="UniPathway" id="UPA00031">
    <property type="reaction ID" value="UER00009"/>
</dbReference>
<dbReference type="Proteomes" id="UP000000416">
    <property type="component" value="Chromosome"/>
</dbReference>
<dbReference type="GO" id="GO:0005737">
    <property type="term" value="C:cytoplasm"/>
    <property type="evidence" value="ECO:0007669"/>
    <property type="project" value="UniProtKB-SubCell"/>
</dbReference>
<dbReference type="GO" id="GO:0003949">
    <property type="term" value="F:1-(5-phosphoribosyl)-5-[(5-phosphoribosylamino)methylideneamino]imidazole-4-carboxamide isomerase activity"/>
    <property type="evidence" value="ECO:0007669"/>
    <property type="project" value="UniProtKB-UniRule"/>
</dbReference>
<dbReference type="GO" id="GO:0000105">
    <property type="term" value="P:L-histidine biosynthetic process"/>
    <property type="evidence" value="ECO:0007669"/>
    <property type="project" value="UniProtKB-UniRule"/>
</dbReference>
<dbReference type="GO" id="GO:0000162">
    <property type="term" value="P:L-tryptophan biosynthetic process"/>
    <property type="evidence" value="ECO:0007669"/>
    <property type="project" value="TreeGrafter"/>
</dbReference>
<dbReference type="CDD" id="cd04732">
    <property type="entry name" value="HisA"/>
    <property type="match status" value="1"/>
</dbReference>
<dbReference type="FunFam" id="3.20.20.70:FF:000009">
    <property type="entry name" value="1-(5-phosphoribosyl)-5-[(5-phosphoribosylamino)methylideneamino] imidazole-4-carboxamide isomerase"/>
    <property type="match status" value="1"/>
</dbReference>
<dbReference type="Gene3D" id="3.20.20.70">
    <property type="entry name" value="Aldolase class I"/>
    <property type="match status" value="1"/>
</dbReference>
<dbReference type="HAMAP" id="MF_01014">
    <property type="entry name" value="HisA"/>
    <property type="match status" value="1"/>
</dbReference>
<dbReference type="InterPro" id="IPR013785">
    <property type="entry name" value="Aldolase_TIM"/>
</dbReference>
<dbReference type="InterPro" id="IPR006062">
    <property type="entry name" value="His_biosynth"/>
</dbReference>
<dbReference type="InterPro" id="IPR006063">
    <property type="entry name" value="HisA_bact_arch"/>
</dbReference>
<dbReference type="InterPro" id="IPR044524">
    <property type="entry name" value="Isoase_HisA-like"/>
</dbReference>
<dbReference type="InterPro" id="IPR023016">
    <property type="entry name" value="Isoase_HisA-like_bact"/>
</dbReference>
<dbReference type="InterPro" id="IPR011060">
    <property type="entry name" value="RibuloseP-bd_barrel"/>
</dbReference>
<dbReference type="NCBIfam" id="TIGR00007">
    <property type="entry name" value="1-(5-phosphoribosyl)-5-[(5-phosphoribosylamino)methylideneamino]imidazole-4-carboxamide isomerase"/>
    <property type="match status" value="1"/>
</dbReference>
<dbReference type="PANTHER" id="PTHR43090">
    <property type="entry name" value="1-(5-PHOSPHORIBOSYL)-5-[(5-PHOSPHORIBOSYLAMINO)METHYLIDENEAMINO] IMIDAZOLE-4-CARBOXAMIDE ISOMERASE"/>
    <property type="match status" value="1"/>
</dbReference>
<dbReference type="PANTHER" id="PTHR43090:SF2">
    <property type="entry name" value="1-(5-PHOSPHORIBOSYL)-5-[(5-PHOSPHORIBOSYLAMINO)METHYLIDENEAMINO] IMIDAZOLE-4-CARBOXAMIDE ISOMERASE"/>
    <property type="match status" value="1"/>
</dbReference>
<dbReference type="Pfam" id="PF00977">
    <property type="entry name" value="His_biosynth"/>
    <property type="match status" value="1"/>
</dbReference>
<dbReference type="SUPFAM" id="SSF51366">
    <property type="entry name" value="Ribulose-phoshate binding barrel"/>
    <property type="match status" value="1"/>
</dbReference>
<sequence length="244" mass="27775">MIIPAFDLINGEIVRLYKGNFFNRTKYDINLYKRLKDYEIKGVKKIHLVDLDGAKNIKDRQIKVFRDIISYTNIPIQIGGGIRNEEDINMFLNLGVKKVVIGSSAIKNKTKVKKWLKIYGPNVIILALDIIIKNNNKEIAIHGWQETTNITLEEIIEYFSPIGLKHVLCTDISKDGTLSGPNNILYKDIVKKFKHISFQASGGVSRLKDLLSLKKTGVKSVIIGRSLLENKFTIEEALKCWQSE</sequence>
<gene>
    <name type="primary">hisA</name>
    <name type="ordered locus">BUsg_097</name>
</gene>
<accession>Q9ZHE2</accession>
<proteinExistence type="inferred from homology"/>
<protein>
    <recommendedName>
        <fullName>1-(5-phosphoribosyl)-5-[(5-phosphoribosylamino)methylideneamino] imidazole-4-carboxamide isomerase</fullName>
        <ecNumber>5.3.1.16</ecNumber>
    </recommendedName>
    <alternativeName>
        <fullName>Phosphoribosylformimino-5-aminoimidazole carboxamide ribotide isomerase</fullName>
    </alternativeName>
</protein>
<evidence type="ECO:0000250" key="1"/>
<evidence type="ECO:0000305" key="2"/>
<organism>
    <name type="scientific">Buchnera aphidicola subsp. Schizaphis graminum (strain Sg)</name>
    <dbReference type="NCBI Taxonomy" id="198804"/>
    <lineage>
        <taxon>Bacteria</taxon>
        <taxon>Pseudomonadati</taxon>
        <taxon>Pseudomonadota</taxon>
        <taxon>Gammaproteobacteria</taxon>
        <taxon>Enterobacterales</taxon>
        <taxon>Erwiniaceae</taxon>
        <taxon>Buchnera</taxon>
    </lineage>
</organism>
<reference key="1">
    <citation type="journal article" date="1998" name="Curr. Microbiol.">
        <title>Buchnera aphidicola (Aphid endosymbiont) contains genes encoding enzymes of histidine biosynthesis.</title>
        <authorList>
            <person name="Clark M.A."/>
            <person name="Baumann L."/>
            <person name="Baumann P."/>
        </authorList>
    </citation>
    <scope>NUCLEOTIDE SEQUENCE [GENOMIC DNA]</scope>
</reference>
<reference key="2">
    <citation type="journal article" date="2002" name="Science">
        <title>50 million years of genomic stasis in endosymbiotic bacteria.</title>
        <authorList>
            <person name="Tamas I."/>
            <person name="Klasson L."/>
            <person name="Canbaeck B."/>
            <person name="Naeslund A.K."/>
            <person name="Eriksson A.-S."/>
            <person name="Wernegreen J.J."/>
            <person name="Sandstroem J.P."/>
            <person name="Moran N.A."/>
            <person name="Andersson S.G.E."/>
        </authorList>
    </citation>
    <scope>NUCLEOTIDE SEQUENCE [LARGE SCALE GENOMIC DNA]</scope>
    <source>
        <strain>Sg</strain>
    </source>
</reference>
<feature type="chain" id="PRO_0000141988" description="1-(5-phosphoribosyl)-5-[(5-phosphoribosylamino)methylideneamino] imidazole-4-carboxamide isomerase">
    <location>
        <begin position="1"/>
        <end position="244"/>
    </location>
</feature>
<feature type="active site" description="Proton acceptor" evidence="1">
    <location>
        <position position="7"/>
    </location>
</feature>
<feature type="active site" description="Proton donor" evidence="1">
    <location>
        <position position="129"/>
    </location>
</feature>
<comment type="catalytic activity">
    <reaction>
        <text>1-(5-phospho-beta-D-ribosyl)-5-[(5-phospho-beta-D-ribosylamino)methylideneamino]imidazole-4-carboxamide = 5-[(5-phospho-1-deoxy-D-ribulos-1-ylimino)methylamino]-1-(5-phospho-beta-D-ribosyl)imidazole-4-carboxamide</text>
        <dbReference type="Rhea" id="RHEA:15469"/>
        <dbReference type="ChEBI" id="CHEBI:58435"/>
        <dbReference type="ChEBI" id="CHEBI:58525"/>
        <dbReference type="EC" id="5.3.1.16"/>
    </reaction>
</comment>
<comment type="pathway">
    <text>Amino-acid biosynthesis; L-histidine biosynthesis; L-histidine from 5-phospho-alpha-D-ribose 1-diphosphate: step 4/9.</text>
</comment>
<comment type="subcellular location">
    <subcellularLocation>
        <location evidence="1">Cytoplasm</location>
    </subcellularLocation>
</comment>
<comment type="similarity">
    <text evidence="2">Belongs to the HisA/HisF family.</text>
</comment>
<name>HIS4_BUCAP</name>
<keyword id="KW-0028">Amino-acid biosynthesis</keyword>
<keyword id="KW-0963">Cytoplasm</keyword>
<keyword id="KW-0368">Histidine biosynthesis</keyword>
<keyword id="KW-0413">Isomerase</keyword>